<accession>Q4L6R3</accession>
<protein>
    <recommendedName>
        <fullName evidence="1">Putative pyruvate, phosphate dikinase regulatory protein 2</fullName>
        <shortName evidence="1">PPDK regulatory protein 2</shortName>
        <ecNumber evidence="1">2.7.11.32</ecNumber>
        <ecNumber evidence="1">2.7.4.27</ecNumber>
    </recommendedName>
</protein>
<evidence type="ECO:0000255" key="1">
    <source>
        <dbReference type="HAMAP-Rule" id="MF_00921"/>
    </source>
</evidence>
<keyword id="KW-0418">Kinase</keyword>
<keyword id="KW-0547">Nucleotide-binding</keyword>
<keyword id="KW-0723">Serine/threonine-protein kinase</keyword>
<keyword id="KW-0808">Transferase</keyword>
<gene>
    <name type="ordered locus">SH1353</name>
</gene>
<proteinExistence type="inferred from homology"/>
<dbReference type="EC" id="2.7.11.32" evidence="1"/>
<dbReference type="EC" id="2.7.4.27" evidence="1"/>
<dbReference type="EMBL" id="AP006716">
    <property type="protein sequence ID" value="BAE04662.1"/>
    <property type="molecule type" value="Genomic_DNA"/>
</dbReference>
<dbReference type="RefSeq" id="WP_011275649.1">
    <property type="nucleotide sequence ID" value="NC_007168.1"/>
</dbReference>
<dbReference type="SMR" id="Q4L6R3"/>
<dbReference type="KEGG" id="sha:SH1353"/>
<dbReference type="eggNOG" id="COG1806">
    <property type="taxonomic scope" value="Bacteria"/>
</dbReference>
<dbReference type="HOGENOM" id="CLU_046206_2_1_9"/>
<dbReference type="OrthoDB" id="9782201at2"/>
<dbReference type="Proteomes" id="UP000000543">
    <property type="component" value="Chromosome"/>
</dbReference>
<dbReference type="GO" id="GO:0043531">
    <property type="term" value="F:ADP binding"/>
    <property type="evidence" value="ECO:0007669"/>
    <property type="project" value="UniProtKB-UniRule"/>
</dbReference>
<dbReference type="GO" id="GO:0005524">
    <property type="term" value="F:ATP binding"/>
    <property type="evidence" value="ECO:0007669"/>
    <property type="project" value="InterPro"/>
</dbReference>
<dbReference type="GO" id="GO:0016776">
    <property type="term" value="F:phosphotransferase activity, phosphate group as acceptor"/>
    <property type="evidence" value="ECO:0007669"/>
    <property type="project" value="UniProtKB-UniRule"/>
</dbReference>
<dbReference type="GO" id="GO:0004674">
    <property type="term" value="F:protein serine/threonine kinase activity"/>
    <property type="evidence" value="ECO:0007669"/>
    <property type="project" value="UniProtKB-UniRule"/>
</dbReference>
<dbReference type="HAMAP" id="MF_00921">
    <property type="entry name" value="PDRP"/>
    <property type="match status" value="1"/>
</dbReference>
<dbReference type="InterPro" id="IPR005177">
    <property type="entry name" value="Kinase-pyrophosphorylase"/>
</dbReference>
<dbReference type="InterPro" id="IPR026565">
    <property type="entry name" value="PPDK_reg"/>
</dbReference>
<dbReference type="NCBIfam" id="NF003742">
    <property type="entry name" value="PRK05339.1"/>
    <property type="match status" value="1"/>
</dbReference>
<dbReference type="PANTHER" id="PTHR31756">
    <property type="entry name" value="PYRUVATE, PHOSPHATE DIKINASE REGULATORY PROTEIN 1, CHLOROPLASTIC"/>
    <property type="match status" value="1"/>
</dbReference>
<dbReference type="PANTHER" id="PTHR31756:SF3">
    <property type="entry name" value="PYRUVATE, PHOSPHATE DIKINASE REGULATORY PROTEIN 1, CHLOROPLASTIC"/>
    <property type="match status" value="1"/>
</dbReference>
<dbReference type="Pfam" id="PF03618">
    <property type="entry name" value="Kinase-PPPase"/>
    <property type="match status" value="1"/>
</dbReference>
<organism>
    <name type="scientific">Staphylococcus haemolyticus (strain JCSC1435)</name>
    <dbReference type="NCBI Taxonomy" id="279808"/>
    <lineage>
        <taxon>Bacteria</taxon>
        <taxon>Bacillati</taxon>
        <taxon>Bacillota</taxon>
        <taxon>Bacilli</taxon>
        <taxon>Bacillales</taxon>
        <taxon>Staphylococcaceae</taxon>
        <taxon>Staphylococcus</taxon>
    </lineage>
</organism>
<comment type="function">
    <text evidence="1">Bifunctional serine/threonine kinase and phosphorylase involved in the regulation of the pyruvate, phosphate dikinase (PPDK) by catalyzing its phosphorylation/dephosphorylation.</text>
</comment>
<comment type="catalytic activity">
    <reaction evidence="1">
        <text>N(tele)-phospho-L-histidyl/L-threonyl-[pyruvate, phosphate dikinase] + ADP = N(tele)-phospho-L-histidyl/O-phospho-L-threonyl-[pyruvate, phosphate dikinase] + AMP + H(+)</text>
        <dbReference type="Rhea" id="RHEA:43692"/>
        <dbReference type="Rhea" id="RHEA-COMP:10650"/>
        <dbReference type="Rhea" id="RHEA-COMP:10651"/>
        <dbReference type="ChEBI" id="CHEBI:15378"/>
        <dbReference type="ChEBI" id="CHEBI:30013"/>
        <dbReference type="ChEBI" id="CHEBI:61977"/>
        <dbReference type="ChEBI" id="CHEBI:83586"/>
        <dbReference type="ChEBI" id="CHEBI:456215"/>
        <dbReference type="ChEBI" id="CHEBI:456216"/>
        <dbReference type="EC" id="2.7.11.32"/>
    </reaction>
</comment>
<comment type="catalytic activity">
    <reaction evidence="1">
        <text>N(tele)-phospho-L-histidyl/O-phospho-L-threonyl-[pyruvate, phosphate dikinase] + phosphate + H(+) = N(tele)-phospho-L-histidyl/L-threonyl-[pyruvate, phosphate dikinase] + diphosphate</text>
        <dbReference type="Rhea" id="RHEA:43696"/>
        <dbReference type="Rhea" id="RHEA-COMP:10650"/>
        <dbReference type="Rhea" id="RHEA-COMP:10651"/>
        <dbReference type="ChEBI" id="CHEBI:15378"/>
        <dbReference type="ChEBI" id="CHEBI:30013"/>
        <dbReference type="ChEBI" id="CHEBI:33019"/>
        <dbReference type="ChEBI" id="CHEBI:43474"/>
        <dbReference type="ChEBI" id="CHEBI:61977"/>
        <dbReference type="ChEBI" id="CHEBI:83586"/>
        <dbReference type="EC" id="2.7.4.27"/>
    </reaction>
</comment>
<comment type="similarity">
    <text evidence="1">Belongs to the pyruvate, phosphate/water dikinase regulatory protein family. PDRP subfamily.</text>
</comment>
<name>PDRP2_STAHJ</name>
<reference key="1">
    <citation type="journal article" date="2005" name="J. Bacteriol.">
        <title>Whole-genome sequencing of Staphylococcus haemolyticus uncovers the extreme plasticity of its genome and the evolution of human-colonizing staphylococcal species.</title>
        <authorList>
            <person name="Takeuchi F."/>
            <person name="Watanabe S."/>
            <person name="Baba T."/>
            <person name="Yuzawa H."/>
            <person name="Ito T."/>
            <person name="Morimoto Y."/>
            <person name="Kuroda M."/>
            <person name="Cui L."/>
            <person name="Takahashi M."/>
            <person name="Ankai A."/>
            <person name="Baba S."/>
            <person name="Fukui S."/>
            <person name="Lee J.C."/>
            <person name="Hiramatsu K."/>
        </authorList>
    </citation>
    <scope>NUCLEOTIDE SEQUENCE [LARGE SCALE GENOMIC DNA]</scope>
    <source>
        <strain>JCSC1435</strain>
    </source>
</reference>
<sequence>MENIKIIIASDSIGETAELVARACISQFNPKECKHEFLRYPYIETKEDIDEVIQVANDRNAIIVYTLVKPEMKTYMESKIGTNKLRSIDIMGPLMGYLKDAFEENPYNQPGRVHRLDDAYFKKIDAIEFAVKYDDGKDPKGLPKADIVLIGVSRTSKTPLSQYLAHKSYKVMNVPIVPEVTPPDMLFDIDSSKCIALRISEEKLNRIRKQRLKQLGLGDSARYANEIRIKEEIKYFEDIVDRIGCAVIDVSDKAIEETANDVINIIESQSK</sequence>
<feature type="chain" id="PRO_0000196726" description="Putative pyruvate, phosphate dikinase regulatory protein 2">
    <location>
        <begin position="1"/>
        <end position="271"/>
    </location>
</feature>
<feature type="binding site" evidence="1">
    <location>
        <begin position="151"/>
        <end position="158"/>
    </location>
    <ligand>
        <name>ADP</name>
        <dbReference type="ChEBI" id="CHEBI:456216"/>
    </ligand>
</feature>